<organism>
    <name type="scientific">Glaesserella parasuis serovar 5 (strain SH0165)</name>
    <name type="common">Haemophilus parasuis</name>
    <dbReference type="NCBI Taxonomy" id="557723"/>
    <lineage>
        <taxon>Bacteria</taxon>
        <taxon>Pseudomonadati</taxon>
        <taxon>Pseudomonadota</taxon>
        <taxon>Gammaproteobacteria</taxon>
        <taxon>Pasteurellales</taxon>
        <taxon>Pasteurellaceae</taxon>
        <taxon>Glaesserella</taxon>
    </lineage>
</organism>
<comment type="function">
    <text evidence="1">Hydrolyzes ribosome-free peptidyl-tRNAs (with 1 or more amino acids incorporated), which drop off the ribosome during protein synthesis, or as a result of ribosome stalling.</text>
</comment>
<comment type="function">
    <text evidence="1">Catalyzes the release of premature peptidyl moieties from peptidyl-tRNA molecules trapped in stalled 50S ribosomal subunits, and thus maintains levels of free tRNAs and 50S ribosomes.</text>
</comment>
<comment type="catalytic activity">
    <reaction evidence="1">
        <text>an N-acyl-L-alpha-aminoacyl-tRNA + H2O = an N-acyl-L-amino acid + a tRNA + H(+)</text>
        <dbReference type="Rhea" id="RHEA:54448"/>
        <dbReference type="Rhea" id="RHEA-COMP:10123"/>
        <dbReference type="Rhea" id="RHEA-COMP:13883"/>
        <dbReference type="ChEBI" id="CHEBI:15377"/>
        <dbReference type="ChEBI" id="CHEBI:15378"/>
        <dbReference type="ChEBI" id="CHEBI:59874"/>
        <dbReference type="ChEBI" id="CHEBI:78442"/>
        <dbReference type="ChEBI" id="CHEBI:138191"/>
        <dbReference type="EC" id="3.1.1.29"/>
    </reaction>
</comment>
<comment type="subunit">
    <text evidence="1">Monomer.</text>
</comment>
<comment type="subcellular location">
    <subcellularLocation>
        <location evidence="1">Cytoplasm</location>
    </subcellularLocation>
</comment>
<comment type="similarity">
    <text evidence="1">Belongs to the PTH family.</text>
</comment>
<gene>
    <name evidence="1" type="primary">pth</name>
    <name type="ordered locus">HAPS_0763</name>
</gene>
<proteinExistence type="inferred from homology"/>
<evidence type="ECO:0000255" key="1">
    <source>
        <dbReference type="HAMAP-Rule" id="MF_00083"/>
    </source>
</evidence>
<keyword id="KW-0963">Cytoplasm</keyword>
<keyword id="KW-0378">Hydrolase</keyword>
<keyword id="KW-1185">Reference proteome</keyword>
<keyword id="KW-0694">RNA-binding</keyword>
<keyword id="KW-0820">tRNA-binding</keyword>
<name>PTH_GLAP5</name>
<accession>B8F503</accession>
<feature type="chain" id="PRO_1000118393" description="Peptidyl-tRNA hydrolase">
    <location>
        <begin position="1"/>
        <end position="194"/>
    </location>
</feature>
<feature type="active site" description="Proton acceptor" evidence="1">
    <location>
        <position position="22"/>
    </location>
</feature>
<feature type="binding site" evidence="1">
    <location>
        <position position="17"/>
    </location>
    <ligand>
        <name>tRNA</name>
        <dbReference type="ChEBI" id="CHEBI:17843"/>
    </ligand>
</feature>
<feature type="binding site" evidence="1">
    <location>
        <position position="68"/>
    </location>
    <ligand>
        <name>tRNA</name>
        <dbReference type="ChEBI" id="CHEBI:17843"/>
    </ligand>
</feature>
<feature type="binding site" evidence="1">
    <location>
        <position position="70"/>
    </location>
    <ligand>
        <name>tRNA</name>
        <dbReference type="ChEBI" id="CHEBI:17843"/>
    </ligand>
</feature>
<feature type="binding site" evidence="1">
    <location>
        <position position="116"/>
    </location>
    <ligand>
        <name>tRNA</name>
        <dbReference type="ChEBI" id="CHEBI:17843"/>
    </ligand>
</feature>
<feature type="site" description="Discriminates between blocked and unblocked aminoacyl-tRNA" evidence="1">
    <location>
        <position position="12"/>
    </location>
</feature>
<feature type="site" description="Stabilizes the basic form of H active site to accept a proton" evidence="1">
    <location>
        <position position="95"/>
    </location>
</feature>
<sequence length="194" mass="21021">MSQIKLIVGLANPGAKYEETRHNAGEWLVNELARVFNVTLKEEAKYFGKVAKINTPQGEVRLLVPTTFMNLSGKAVGSLANFYRIKPEEILVAHDELDLLPGVAKIKQGGGHGGHNGLKDIIAALGNSNNFYRVRIGIGHPGHKDLVASYVLGKPSPSDQPLINVAVDEASRCVELLFKEGIVKATNRLNGFKA</sequence>
<protein>
    <recommendedName>
        <fullName evidence="1">Peptidyl-tRNA hydrolase</fullName>
        <shortName evidence="1">Pth</shortName>
        <ecNumber evidence="1">3.1.1.29</ecNumber>
    </recommendedName>
</protein>
<reference key="1">
    <citation type="journal article" date="2009" name="J. Bacteriol.">
        <title>Complete genome sequence of Haemophilus parasuis SH0165.</title>
        <authorList>
            <person name="Yue M."/>
            <person name="Yang F."/>
            <person name="Yang J."/>
            <person name="Bei W."/>
            <person name="Cai X."/>
            <person name="Chen L."/>
            <person name="Dong J."/>
            <person name="Zhou R."/>
            <person name="Jin M."/>
            <person name="Jin Q."/>
            <person name="Chen H."/>
        </authorList>
    </citation>
    <scope>NUCLEOTIDE SEQUENCE [LARGE SCALE GENOMIC DNA]</scope>
    <source>
        <strain>SH0165</strain>
    </source>
</reference>
<dbReference type="EC" id="3.1.1.29" evidence="1"/>
<dbReference type="EMBL" id="CP001321">
    <property type="protein sequence ID" value="ACL32405.1"/>
    <property type="molecule type" value="Genomic_DNA"/>
</dbReference>
<dbReference type="RefSeq" id="WP_012621899.1">
    <property type="nucleotide sequence ID" value="NC_011852.1"/>
</dbReference>
<dbReference type="SMR" id="B8F503"/>
<dbReference type="STRING" id="557723.HAPS_0763"/>
<dbReference type="KEGG" id="hap:HAPS_0763"/>
<dbReference type="PATRIC" id="fig|557723.8.peg.764"/>
<dbReference type="HOGENOM" id="CLU_062456_3_1_6"/>
<dbReference type="Proteomes" id="UP000006743">
    <property type="component" value="Chromosome"/>
</dbReference>
<dbReference type="GO" id="GO:0005737">
    <property type="term" value="C:cytoplasm"/>
    <property type="evidence" value="ECO:0007669"/>
    <property type="project" value="UniProtKB-SubCell"/>
</dbReference>
<dbReference type="GO" id="GO:0004045">
    <property type="term" value="F:peptidyl-tRNA hydrolase activity"/>
    <property type="evidence" value="ECO:0007669"/>
    <property type="project" value="UniProtKB-UniRule"/>
</dbReference>
<dbReference type="GO" id="GO:0000049">
    <property type="term" value="F:tRNA binding"/>
    <property type="evidence" value="ECO:0007669"/>
    <property type="project" value="UniProtKB-UniRule"/>
</dbReference>
<dbReference type="GO" id="GO:0006515">
    <property type="term" value="P:protein quality control for misfolded or incompletely synthesized proteins"/>
    <property type="evidence" value="ECO:0007669"/>
    <property type="project" value="UniProtKB-UniRule"/>
</dbReference>
<dbReference type="GO" id="GO:0072344">
    <property type="term" value="P:rescue of stalled ribosome"/>
    <property type="evidence" value="ECO:0007669"/>
    <property type="project" value="UniProtKB-UniRule"/>
</dbReference>
<dbReference type="CDD" id="cd00462">
    <property type="entry name" value="PTH"/>
    <property type="match status" value="1"/>
</dbReference>
<dbReference type="FunFam" id="3.40.50.1470:FF:000001">
    <property type="entry name" value="Peptidyl-tRNA hydrolase"/>
    <property type="match status" value="1"/>
</dbReference>
<dbReference type="Gene3D" id="3.40.50.1470">
    <property type="entry name" value="Peptidyl-tRNA hydrolase"/>
    <property type="match status" value="1"/>
</dbReference>
<dbReference type="HAMAP" id="MF_00083">
    <property type="entry name" value="Pept_tRNA_hydro_bact"/>
    <property type="match status" value="1"/>
</dbReference>
<dbReference type="InterPro" id="IPR001328">
    <property type="entry name" value="Pept_tRNA_hydro"/>
</dbReference>
<dbReference type="InterPro" id="IPR018171">
    <property type="entry name" value="Pept_tRNA_hydro_CS"/>
</dbReference>
<dbReference type="InterPro" id="IPR036416">
    <property type="entry name" value="Pept_tRNA_hydro_sf"/>
</dbReference>
<dbReference type="NCBIfam" id="TIGR00447">
    <property type="entry name" value="pth"/>
    <property type="match status" value="1"/>
</dbReference>
<dbReference type="PANTHER" id="PTHR17224">
    <property type="entry name" value="PEPTIDYL-TRNA HYDROLASE"/>
    <property type="match status" value="1"/>
</dbReference>
<dbReference type="PANTHER" id="PTHR17224:SF1">
    <property type="entry name" value="PEPTIDYL-TRNA HYDROLASE"/>
    <property type="match status" value="1"/>
</dbReference>
<dbReference type="Pfam" id="PF01195">
    <property type="entry name" value="Pept_tRNA_hydro"/>
    <property type="match status" value="1"/>
</dbReference>
<dbReference type="SUPFAM" id="SSF53178">
    <property type="entry name" value="Peptidyl-tRNA hydrolase-like"/>
    <property type="match status" value="1"/>
</dbReference>
<dbReference type="PROSITE" id="PS01195">
    <property type="entry name" value="PEPT_TRNA_HYDROL_1"/>
    <property type="match status" value="1"/>
</dbReference>
<dbReference type="PROSITE" id="PS01196">
    <property type="entry name" value="PEPT_TRNA_HYDROL_2"/>
    <property type="match status" value="1"/>
</dbReference>